<proteinExistence type="inferred from homology"/>
<name>MURA_METPB</name>
<feature type="chain" id="PRO_1000094701" description="UDP-N-acetylglucosamine 1-carboxyvinyltransferase">
    <location>
        <begin position="1"/>
        <end position="429"/>
    </location>
</feature>
<feature type="active site" description="Proton donor" evidence="1">
    <location>
        <position position="126"/>
    </location>
</feature>
<feature type="binding site" evidence="1">
    <location>
        <begin position="22"/>
        <end position="23"/>
    </location>
    <ligand>
        <name>phosphoenolpyruvate</name>
        <dbReference type="ChEBI" id="CHEBI:58702"/>
    </ligand>
</feature>
<feature type="binding site" evidence="1">
    <location>
        <position position="102"/>
    </location>
    <ligand>
        <name>UDP-N-acetyl-alpha-D-glucosamine</name>
        <dbReference type="ChEBI" id="CHEBI:57705"/>
    </ligand>
</feature>
<feature type="binding site" evidence="1">
    <location>
        <begin position="131"/>
        <end position="135"/>
    </location>
    <ligand>
        <name>UDP-N-acetyl-alpha-D-glucosamine</name>
        <dbReference type="ChEBI" id="CHEBI:57705"/>
    </ligand>
</feature>
<feature type="binding site" evidence="1">
    <location>
        <position position="316"/>
    </location>
    <ligand>
        <name>UDP-N-acetyl-alpha-D-glucosamine</name>
        <dbReference type="ChEBI" id="CHEBI:57705"/>
    </ligand>
</feature>
<feature type="binding site" evidence="1">
    <location>
        <position position="338"/>
    </location>
    <ligand>
        <name>UDP-N-acetyl-alpha-D-glucosamine</name>
        <dbReference type="ChEBI" id="CHEBI:57705"/>
    </ligand>
</feature>
<feature type="modified residue" description="2-(S-cysteinyl)pyruvic acid O-phosphothioketal" evidence="1">
    <location>
        <position position="126"/>
    </location>
</feature>
<evidence type="ECO:0000255" key="1">
    <source>
        <dbReference type="HAMAP-Rule" id="MF_00111"/>
    </source>
</evidence>
<keyword id="KW-0131">Cell cycle</keyword>
<keyword id="KW-0132">Cell division</keyword>
<keyword id="KW-0133">Cell shape</keyword>
<keyword id="KW-0961">Cell wall biogenesis/degradation</keyword>
<keyword id="KW-0963">Cytoplasm</keyword>
<keyword id="KW-0573">Peptidoglycan synthesis</keyword>
<keyword id="KW-0670">Pyruvate</keyword>
<keyword id="KW-0808">Transferase</keyword>
<organism>
    <name type="scientific">Methylorubrum populi (strain ATCC BAA-705 / NCIMB 13946 / BJ001)</name>
    <name type="common">Methylobacterium populi</name>
    <dbReference type="NCBI Taxonomy" id="441620"/>
    <lineage>
        <taxon>Bacteria</taxon>
        <taxon>Pseudomonadati</taxon>
        <taxon>Pseudomonadota</taxon>
        <taxon>Alphaproteobacteria</taxon>
        <taxon>Hyphomicrobiales</taxon>
        <taxon>Methylobacteriaceae</taxon>
        <taxon>Methylorubrum</taxon>
    </lineage>
</organism>
<dbReference type="EC" id="2.5.1.7" evidence="1"/>
<dbReference type="EMBL" id="CP001029">
    <property type="protein sequence ID" value="ACB80105.1"/>
    <property type="molecule type" value="Genomic_DNA"/>
</dbReference>
<dbReference type="RefSeq" id="WP_012453850.1">
    <property type="nucleotide sequence ID" value="NC_010725.1"/>
</dbReference>
<dbReference type="SMR" id="B1ZKB3"/>
<dbReference type="STRING" id="441620.Mpop_1942"/>
<dbReference type="KEGG" id="mpo:Mpop_1942"/>
<dbReference type="eggNOG" id="COG0766">
    <property type="taxonomic scope" value="Bacteria"/>
</dbReference>
<dbReference type="HOGENOM" id="CLU_027387_0_0_5"/>
<dbReference type="OrthoDB" id="9803760at2"/>
<dbReference type="UniPathway" id="UPA00219"/>
<dbReference type="Proteomes" id="UP000007136">
    <property type="component" value="Chromosome"/>
</dbReference>
<dbReference type="GO" id="GO:0005737">
    <property type="term" value="C:cytoplasm"/>
    <property type="evidence" value="ECO:0007669"/>
    <property type="project" value="UniProtKB-SubCell"/>
</dbReference>
<dbReference type="GO" id="GO:0008760">
    <property type="term" value="F:UDP-N-acetylglucosamine 1-carboxyvinyltransferase activity"/>
    <property type="evidence" value="ECO:0007669"/>
    <property type="project" value="UniProtKB-UniRule"/>
</dbReference>
<dbReference type="GO" id="GO:0051301">
    <property type="term" value="P:cell division"/>
    <property type="evidence" value="ECO:0007669"/>
    <property type="project" value="UniProtKB-KW"/>
</dbReference>
<dbReference type="GO" id="GO:0071555">
    <property type="term" value="P:cell wall organization"/>
    <property type="evidence" value="ECO:0007669"/>
    <property type="project" value="UniProtKB-KW"/>
</dbReference>
<dbReference type="GO" id="GO:0009252">
    <property type="term" value="P:peptidoglycan biosynthetic process"/>
    <property type="evidence" value="ECO:0007669"/>
    <property type="project" value="UniProtKB-UniRule"/>
</dbReference>
<dbReference type="GO" id="GO:0008360">
    <property type="term" value="P:regulation of cell shape"/>
    <property type="evidence" value="ECO:0007669"/>
    <property type="project" value="UniProtKB-KW"/>
</dbReference>
<dbReference type="GO" id="GO:0019277">
    <property type="term" value="P:UDP-N-acetylgalactosamine biosynthetic process"/>
    <property type="evidence" value="ECO:0007669"/>
    <property type="project" value="InterPro"/>
</dbReference>
<dbReference type="CDD" id="cd01555">
    <property type="entry name" value="UdpNAET"/>
    <property type="match status" value="1"/>
</dbReference>
<dbReference type="FunFam" id="3.65.10.10:FF:000001">
    <property type="entry name" value="UDP-N-acetylglucosamine 1-carboxyvinyltransferase"/>
    <property type="match status" value="1"/>
</dbReference>
<dbReference type="Gene3D" id="3.65.10.10">
    <property type="entry name" value="Enolpyruvate transferase domain"/>
    <property type="match status" value="2"/>
</dbReference>
<dbReference type="HAMAP" id="MF_00111">
    <property type="entry name" value="MurA"/>
    <property type="match status" value="1"/>
</dbReference>
<dbReference type="InterPro" id="IPR001986">
    <property type="entry name" value="Enolpyruvate_Tfrase_dom"/>
</dbReference>
<dbReference type="InterPro" id="IPR036968">
    <property type="entry name" value="Enolpyruvate_Tfrase_sf"/>
</dbReference>
<dbReference type="InterPro" id="IPR050068">
    <property type="entry name" value="MurA_subfamily"/>
</dbReference>
<dbReference type="InterPro" id="IPR013792">
    <property type="entry name" value="RNA3'P_cycl/enolpyr_Trfase_a/b"/>
</dbReference>
<dbReference type="InterPro" id="IPR005750">
    <property type="entry name" value="UDP_GlcNAc_COvinyl_MurA"/>
</dbReference>
<dbReference type="NCBIfam" id="TIGR01072">
    <property type="entry name" value="murA"/>
    <property type="match status" value="1"/>
</dbReference>
<dbReference type="NCBIfam" id="NF006873">
    <property type="entry name" value="PRK09369.1"/>
    <property type="match status" value="1"/>
</dbReference>
<dbReference type="PANTHER" id="PTHR43783">
    <property type="entry name" value="UDP-N-ACETYLGLUCOSAMINE 1-CARBOXYVINYLTRANSFERASE"/>
    <property type="match status" value="1"/>
</dbReference>
<dbReference type="PANTHER" id="PTHR43783:SF1">
    <property type="entry name" value="UDP-N-ACETYLGLUCOSAMINE 1-CARBOXYVINYLTRANSFERASE"/>
    <property type="match status" value="1"/>
</dbReference>
<dbReference type="Pfam" id="PF00275">
    <property type="entry name" value="EPSP_synthase"/>
    <property type="match status" value="1"/>
</dbReference>
<dbReference type="SUPFAM" id="SSF55205">
    <property type="entry name" value="EPT/RTPC-like"/>
    <property type="match status" value="1"/>
</dbReference>
<gene>
    <name evidence="1" type="primary">murA</name>
    <name type="ordered locus">Mpop_1942</name>
</gene>
<sequence length="429" mass="45137">MDRIHITGGTPLNGTIPISGAKNAALPLMIASLLTGETLELINVPRLADIAALTRILGNHGVDHMVVGKRPGQTAETGQTVRLTASNVIDTTAPYELVSTMRASFWVIAPLLARFGEAKVSLPGGCAIGTRPVDLLIMALEKLGAEIEIDGGYVVAKTKNGLRGAEITFPTVTVGGTHVALMAAALAYGTTVIDNAAREPEVVDLAECLSKMGARIEGAGTSRIVVEGVARLGGARHEVLPDRIETGTYAMAVAMTGGDVSLVNTRTELLASALDVLASTGTEITALPDGIRVRRNGGGISPADVTTDPFPGFPTDLQAQFMALMTLAKGQSRIRETIFENRFMHVQELARLGARIRLDGDLAVVEGVERLKGAPVMATDLRASVSLVIGALAAEGETQINRVYHLDRGFEALEAKLGRCGARIERVRA</sequence>
<protein>
    <recommendedName>
        <fullName evidence="1">UDP-N-acetylglucosamine 1-carboxyvinyltransferase</fullName>
        <ecNumber evidence="1">2.5.1.7</ecNumber>
    </recommendedName>
    <alternativeName>
        <fullName evidence="1">Enoylpyruvate transferase</fullName>
    </alternativeName>
    <alternativeName>
        <fullName evidence="1">UDP-N-acetylglucosamine enolpyruvyl transferase</fullName>
        <shortName evidence="1">EPT</shortName>
    </alternativeName>
</protein>
<comment type="function">
    <text evidence="1">Cell wall formation. Adds enolpyruvyl to UDP-N-acetylglucosamine.</text>
</comment>
<comment type="catalytic activity">
    <reaction evidence="1">
        <text>phosphoenolpyruvate + UDP-N-acetyl-alpha-D-glucosamine = UDP-N-acetyl-3-O-(1-carboxyvinyl)-alpha-D-glucosamine + phosphate</text>
        <dbReference type="Rhea" id="RHEA:18681"/>
        <dbReference type="ChEBI" id="CHEBI:43474"/>
        <dbReference type="ChEBI" id="CHEBI:57705"/>
        <dbReference type="ChEBI" id="CHEBI:58702"/>
        <dbReference type="ChEBI" id="CHEBI:68483"/>
        <dbReference type="EC" id="2.5.1.7"/>
    </reaction>
</comment>
<comment type="pathway">
    <text evidence="1">Cell wall biogenesis; peptidoglycan biosynthesis.</text>
</comment>
<comment type="subcellular location">
    <subcellularLocation>
        <location evidence="1">Cytoplasm</location>
    </subcellularLocation>
</comment>
<comment type="similarity">
    <text evidence="1">Belongs to the EPSP synthase family. MurA subfamily.</text>
</comment>
<accession>B1ZKB3</accession>
<reference key="1">
    <citation type="submission" date="2008-04" db="EMBL/GenBank/DDBJ databases">
        <title>Complete sequence of chromosome of Methylobacterium populi BJ001.</title>
        <authorList>
            <consortium name="US DOE Joint Genome Institute"/>
            <person name="Copeland A."/>
            <person name="Lucas S."/>
            <person name="Lapidus A."/>
            <person name="Glavina del Rio T."/>
            <person name="Dalin E."/>
            <person name="Tice H."/>
            <person name="Bruce D."/>
            <person name="Goodwin L."/>
            <person name="Pitluck S."/>
            <person name="Chertkov O."/>
            <person name="Brettin T."/>
            <person name="Detter J.C."/>
            <person name="Han C."/>
            <person name="Kuske C.R."/>
            <person name="Schmutz J."/>
            <person name="Larimer F."/>
            <person name="Land M."/>
            <person name="Hauser L."/>
            <person name="Kyrpides N."/>
            <person name="Mikhailova N."/>
            <person name="Marx C."/>
            <person name="Richardson P."/>
        </authorList>
    </citation>
    <scope>NUCLEOTIDE SEQUENCE [LARGE SCALE GENOMIC DNA]</scope>
    <source>
        <strain>ATCC BAA-705 / NCIMB 13946 / BJ001</strain>
    </source>
</reference>